<proteinExistence type="inferred from homology"/>
<organism>
    <name type="scientific">Brevibacillus brevis (strain 47 / JCM 6285 / NBRC 100599)</name>
    <dbReference type="NCBI Taxonomy" id="358681"/>
    <lineage>
        <taxon>Bacteria</taxon>
        <taxon>Bacillati</taxon>
        <taxon>Bacillota</taxon>
        <taxon>Bacilli</taxon>
        <taxon>Bacillales</taxon>
        <taxon>Paenibacillaceae</taxon>
        <taxon>Brevibacillus</taxon>
    </lineage>
</organism>
<keyword id="KW-0030">Aminoacyl-tRNA synthetase</keyword>
<keyword id="KW-0067">ATP-binding</keyword>
<keyword id="KW-0963">Cytoplasm</keyword>
<keyword id="KW-0436">Ligase</keyword>
<keyword id="KW-0547">Nucleotide-binding</keyword>
<keyword id="KW-0648">Protein biosynthesis</keyword>
<keyword id="KW-1185">Reference proteome</keyword>
<comment type="function">
    <text evidence="1">Catalyzes the attachment of serine to tRNA(Ser). Is also able to aminoacylate tRNA(Sec) with serine, to form the misacylated tRNA L-seryl-tRNA(Sec), which will be further converted into selenocysteinyl-tRNA(Sec).</text>
</comment>
<comment type="catalytic activity">
    <reaction evidence="1">
        <text>tRNA(Ser) + L-serine + ATP = L-seryl-tRNA(Ser) + AMP + diphosphate + H(+)</text>
        <dbReference type="Rhea" id="RHEA:12292"/>
        <dbReference type="Rhea" id="RHEA-COMP:9669"/>
        <dbReference type="Rhea" id="RHEA-COMP:9703"/>
        <dbReference type="ChEBI" id="CHEBI:15378"/>
        <dbReference type="ChEBI" id="CHEBI:30616"/>
        <dbReference type="ChEBI" id="CHEBI:33019"/>
        <dbReference type="ChEBI" id="CHEBI:33384"/>
        <dbReference type="ChEBI" id="CHEBI:78442"/>
        <dbReference type="ChEBI" id="CHEBI:78533"/>
        <dbReference type="ChEBI" id="CHEBI:456215"/>
        <dbReference type="EC" id="6.1.1.11"/>
    </reaction>
</comment>
<comment type="catalytic activity">
    <reaction evidence="1">
        <text>tRNA(Sec) + L-serine + ATP = L-seryl-tRNA(Sec) + AMP + diphosphate + H(+)</text>
        <dbReference type="Rhea" id="RHEA:42580"/>
        <dbReference type="Rhea" id="RHEA-COMP:9742"/>
        <dbReference type="Rhea" id="RHEA-COMP:10128"/>
        <dbReference type="ChEBI" id="CHEBI:15378"/>
        <dbReference type="ChEBI" id="CHEBI:30616"/>
        <dbReference type="ChEBI" id="CHEBI:33019"/>
        <dbReference type="ChEBI" id="CHEBI:33384"/>
        <dbReference type="ChEBI" id="CHEBI:78442"/>
        <dbReference type="ChEBI" id="CHEBI:78533"/>
        <dbReference type="ChEBI" id="CHEBI:456215"/>
        <dbReference type="EC" id="6.1.1.11"/>
    </reaction>
</comment>
<comment type="pathway">
    <text evidence="1">Aminoacyl-tRNA biosynthesis; selenocysteinyl-tRNA(Sec) biosynthesis; L-seryl-tRNA(Sec) from L-serine and tRNA(Sec): step 1/1.</text>
</comment>
<comment type="subunit">
    <text evidence="1">Homodimer. The tRNA molecule binds across the dimer.</text>
</comment>
<comment type="subcellular location">
    <subcellularLocation>
        <location evidence="1">Cytoplasm</location>
    </subcellularLocation>
</comment>
<comment type="domain">
    <text evidence="1">Consists of two distinct domains, a catalytic core and a N-terminal extension that is involved in tRNA binding.</text>
</comment>
<comment type="similarity">
    <text evidence="1">Belongs to the class-II aminoacyl-tRNA synthetase family. Type-1 seryl-tRNA synthetase subfamily.</text>
</comment>
<feature type="chain" id="PRO_1000123874" description="Serine--tRNA ligase">
    <location>
        <begin position="1"/>
        <end position="426"/>
    </location>
</feature>
<feature type="binding site" evidence="1">
    <location>
        <begin position="231"/>
        <end position="233"/>
    </location>
    <ligand>
        <name>L-serine</name>
        <dbReference type="ChEBI" id="CHEBI:33384"/>
    </ligand>
</feature>
<feature type="binding site" evidence="1">
    <location>
        <begin position="262"/>
        <end position="264"/>
    </location>
    <ligand>
        <name>ATP</name>
        <dbReference type="ChEBI" id="CHEBI:30616"/>
    </ligand>
</feature>
<feature type="binding site" evidence="1">
    <location>
        <position position="285"/>
    </location>
    <ligand>
        <name>L-serine</name>
        <dbReference type="ChEBI" id="CHEBI:33384"/>
    </ligand>
</feature>
<feature type="binding site" evidence="1">
    <location>
        <begin position="349"/>
        <end position="352"/>
    </location>
    <ligand>
        <name>ATP</name>
        <dbReference type="ChEBI" id="CHEBI:30616"/>
    </ligand>
</feature>
<feature type="binding site" evidence="1">
    <location>
        <position position="385"/>
    </location>
    <ligand>
        <name>L-serine</name>
        <dbReference type="ChEBI" id="CHEBI:33384"/>
    </ligand>
</feature>
<evidence type="ECO:0000255" key="1">
    <source>
        <dbReference type="HAMAP-Rule" id="MF_00176"/>
    </source>
</evidence>
<reference key="1">
    <citation type="submission" date="2005-03" db="EMBL/GenBank/DDBJ databases">
        <title>Brevibacillus brevis strain 47, complete genome.</title>
        <authorList>
            <person name="Hosoyama A."/>
            <person name="Yamada R."/>
            <person name="Hongo Y."/>
            <person name="Terui Y."/>
            <person name="Ankai A."/>
            <person name="Masuyama W."/>
            <person name="Sekiguchi M."/>
            <person name="Takeda T."/>
            <person name="Asano K."/>
            <person name="Ohji S."/>
            <person name="Ichikawa N."/>
            <person name="Narita S."/>
            <person name="Aoki N."/>
            <person name="Miura H."/>
            <person name="Matsushita S."/>
            <person name="Sekigawa T."/>
            <person name="Yamagata H."/>
            <person name="Yoshikawa H."/>
            <person name="Udaka S."/>
            <person name="Tanikawa S."/>
            <person name="Fujita N."/>
        </authorList>
    </citation>
    <scope>NUCLEOTIDE SEQUENCE [LARGE SCALE GENOMIC DNA]</scope>
    <source>
        <strain>47 / JCM 6285 / NBRC 100599</strain>
    </source>
</reference>
<accession>C0ZH54</accession>
<dbReference type="EC" id="6.1.1.11" evidence="1"/>
<dbReference type="EMBL" id="AP008955">
    <property type="protein sequence ID" value="BAH40995.1"/>
    <property type="molecule type" value="Genomic_DNA"/>
</dbReference>
<dbReference type="RefSeq" id="WP_012683800.1">
    <property type="nucleotide sequence ID" value="NC_012491.1"/>
</dbReference>
<dbReference type="SMR" id="C0ZH54"/>
<dbReference type="STRING" id="358681.BBR47_00180"/>
<dbReference type="KEGG" id="bbe:BBR47_00180"/>
<dbReference type="eggNOG" id="COG0172">
    <property type="taxonomic scope" value="Bacteria"/>
</dbReference>
<dbReference type="HOGENOM" id="CLU_023797_1_1_9"/>
<dbReference type="UniPathway" id="UPA00906">
    <property type="reaction ID" value="UER00895"/>
</dbReference>
<dbReference type="Proteomes" id="UP000001877">
    <property type="component" value="Chromosome"/>
</dbReference>
<dbReference type="GO" id="GO:0005737">
    <property type="term" value="C:cytoplasm"/>
    <property type="evidence" value="ECO:0007669"/>
    <property type="project" value="UniProtKB-SubCell"/>
</dbReference>
<dbReference type="GO" id="GO:0005524">
    <property type="term" value="F:ATP binding"/>
    <property type="evidence" value="ECO:0007669"/>
    <property type="project" value="UniProtKB-UniRule"/>
</dbReference>
<dbReference type="GO" id="GO:0140096">
    <property type="term" value="F:catalytic activity, acting on a protein"/>
    <property type="evidence" value="ECO:0007669"/>
    <property type="project" value="UniProtKB-ARBA"/>
</dbReference>
<dbReference type="GO" id="GO:0004828">
    <property type="term" value="F:serine-tRNA ligase activity"/>
    <property type="evidence" value="ECO:0007669"/>
    <property type="project" value="UniProtKB-UniRule"/>
</dbReference>
<dbReference type="GO" id="GO:0016740">
    <property type="term" value="F:transferase activity"/>
    <property type="evidence" value="ECO:0007669"/>
    <property type="project" value="UniProtKB-ARBA"/>
</dbReference>
<dbReference type="GO" id="GO:0016260">
    <property type="term" value="P:selenocysteine biosynthetic process"/>
    <property type="evidence" value="ECO:0007669"/>
    <property type="project" value="UniProtKB-UniRule"/>
</dbReference>
<dbReference type="GO" id="GO:0006434">
    <property type="term" value="P:seryl-tRNA aminoacylation"/>
    <property type="evidence" value="ECO:0007669"/>
    <property type="project" value="UniProtKB-UniRule"/>
</dbReference>
<dbReference type="CDD" id="cd00770">
    <property type="entry name" value="SerRS_core"/>
    <property type="match status" value="1"/>
</dbReference>
<dbReference type="Gene3D" id="3.30.930.10">
    <property type="entry name" value="Bira Bifunctional Protein, Domain 2"/>
    <property type="match status" value="1"/>
</dbReference>
<dbReference type="Gene3D" id="1.10.287.40">
    <property type="entry name" value="Serine-tRNA synthetase, tRNA binding domain"/>
    <property type="match status" value="1"/>
</dbReference>
<dbReference type="HAMAP" id="MF_00176">
    <property type="entry name" value="Ser_tRNA_synth_type1"/>
    <property type="match status" value="1"/>
</dbReference>
<dbReference type="InterPro" id="IPR002314">
    <property type="entry name" value="aa-tRNA-synt_IIb"/>
</dbReference>
<dbReference type="InterPro" id="IPR006195">
    <property type="entry name" value="aa-tRNA-synth_II"/>
</dbReference>
<dbReference type="InterPro" id="IPR045864">
    <property type="entry name" value="aa-tRNA-synth_II/BPL/LPL"/>
</dbReference>
<dbReference type="InterPro" id="IPR002317">
    <property type="entry name" value="Ser-tRNA-ligase_type_1"/>
</dbReference>
<dbReference type="InterPro" id="IPR015866">
    <property type="entry name" value="Ser-tRNA-synth_1_N"/>
</dbReference>
<dbReference type="InterPro" id="IPR042103">
    <property type="entry name" value="SerRS_1_N_sf"/>
</dbReference>
<dbReference type="InterPro" id="IPR033729">
    <property type="entry name" value="SerRS_core"/>
</dbReference>
<dbReference type="InterPro" id="IPR010978">
    <property type="entry name" value="tRNA-bd_arm"/>
</dbReference>
<dbReference type="NCBIfam" id="TIGR00414">
    <property type="entry name" value="serS"/>
    <property type="match status" value="1"/>
</dbReference>
<dbReference type="PANTHER" id="PTHR43697:SF1">
    <property type="entry name" value="SERINE--TRNA LIGASE"/>
    <property type="match status" value="1"/>
</dbReference>
<dbReference type="PANTHER" id="PTHR43697">
    <property type="entry name" value="SERYL-TRNA SYNTHETASE"/>
    <property type="match status" value="1"/>
</dbReference>
<dbReference type="Pfam" id="PF02403">
    <property type="entry name" value="Seryl_tRNA_N"/>
    <property type="match status" value="1"/>
</dbReference>
<dbReference type="Pfam" id="PF00587">
    <property type="entry name" value="tRNA-synt_2b"/>
    <property type="match status" value="1"/>
</dbReference>
<dbReference type="PIRSF" id="PIRSF001529">
    <property type="entry name" value="Ser-tRNA-synth_IIa"/>
    <property type="match status" value="1"/>
</dbReference>
<dbReference type="PRINTS" id="PR00981">
    <property type="entry name" value="TRNASYNTHSER"/>
</dbReference>
<dbReference type="SUPFAM" id="SSF55681">
    <property type="entry name" value="Class II aaRS and biotin synthetases"/>
    <property type="match status" value="1"/>
</dbReference>
<dbReference type="SUPFAM" id="SSF46589">
    <property type="entry name" value="tRNA-binding arm"/>
    <property type="match status" value="1"/>
</dbReference>
<dbReference type="PROSITE" id="PS50862">
    <property type="entry name" value="AA_TRNA_LIGASE_II"/>
    <property type="match status" value="1"/>
</dbReference>
<protein>
    <recommendedName>
        <fullName evidence="1">Serine--tRNA ligase</fullName>
        <ecNumber evidence="1">6.1.1.11</ecNumber>
    </recommendedName>
    <alternativeName>
        <fullName evidence="1">Seryl-tRNA synthetase</fullName>
        <shortName evidence="1">SerRS</shortName>
    </alternativeName>
    <alternativeName>
        <fullName evidence="1">Seryl-tRNA(Ser/Sec) synthetase</fullName>
    </alternativeName>
</protein>
<gene>
    <name evidence="1" type="primary">serS</name>
    <name type="ordered locus">BBR47_00180</name>
</gene>
<sequence>MLDVKVLRQDLEEVKRRLAHRNEDISALDQFVEVDEKRREVIQEAEALKNKRNTVSEQVAVMKRNKENADHLIAEMKEVNERIKALDEELRQLDEQLEFILLSLPNLPHESTPIGTTEDDNVIAWTWGEPRAFDFEIKPHWELASQAGILDFETAAKVTGSRFVFYKGLGARLERALMNFMMDLHSNEHGYEEVIPPFIVNRTSMTGTGQLPKFEEDAFKIEGPDYFLIPTAEVPVTNMHRDEIMDGADLPRYYTAFSACFRSEAGSAGRDTRGLIRQHQFNKVELVKFVKPEESYDELDKLVKNAEKVLQLLGLPYRVLSMCTGDLGFTAAKKFDIEVWIPSGDTYREISSCSNFEDFQARRANIRFRRDTKSKPEFVHTLNGSGLAIGRTVAAILENYQEADGAIVIPEVLRPYMGGVDKIAPK</sequence>
<name>SYS_BREBN</name>